<gene>
    <name evidence="1" type="primary">rplV</name>
    <name type="ordered locus">XfasM23_0438</name>
</gene>
<comment type="function">
    <text evidence="1">This protein binds specifically to 23S rRNA; its binding is stimulated by other ribosomal proteins, e.g. L4, L17, and L20. It is important during the early stages of 50S assembly. It makes multiple contacts with different domains of the 23S rRNA in the assembled 50S subunit and ribosome (By similarity).</text>
</comment>
<comment type="function">
    <text evidence="1">The globular domain of the protein is located near the polypeptide exit tunnel on the outside of the subunit, while an extended beta-hairpin is found that lines the wall of the exit tunnel in the center of the 70S ribosome.</text>
</comment>
<comment type="subunit">
    <text evidence="1">Part of the 50S ribosomal subunit.</text>
</comment>
<comment type="similarity">
    <text evidence="1">Belongs to the universal ribosomal protein uL22 family.</text>
</comment>
<sequence length="111" mass="11964">MEASAILRGARVSPQKARLVAAQVRGLSADSAVNLLRFSSKKAACLIKKVVESAIANAENNHGSNIDDLRINTIIVDEGRMLKRFMARAKGRSSRIVKRSSHITVVVGPAK</sequence>
<feature type="chain" id="PRO_1000142329" description="Large ribosomal subunit protein uL22">
    <location>
        <begin position="1"/>
        <end position="111"/>
    </location>
</feature>
<evidence type="ECO:0000255" key="1">
    <source>
        <dbReference type="HAMAP-Rule" id="MF_01331"/>
    </source>
</evidence>
<evidence type="ECO:0000305" key="2"/>
<reference key="1">
    <citation type="journal article" date="2010" name="J. Bacteriol.">
        <title>Whole genome sequences of two Xylella fastidiosa strains (M12 and M23) causing almond leaf scorch disease in California.</title>
        <authorList>
            <person name="Chen J."/>
            <person name="Xie G."/>
            <person name="Han S."/>
            <person name="Chertkov O."/>
            <person name="Sims D."/>
            <person name="Civerolo E.L."/>
        </authorList>
    </citation>
    <scope>NUCLEOTIDE SEQUENCE [LARGE SCALE GENOMIC DNA]</scope>
    <source>
        <strain>M23</strain>
    </source>
</reference>
<organism>
    <name type="scientific">Xylella fastidiosa (strain M23)</name>
    <dbReference type="NCBI Taxonomy" id="405441"/>
    <lineage>
        <taxon>Bacteria</taxon>
        <taxon>Pseudomonadati</taxon>
        <taxon>Pseudomonadota</taxon>
        <taxon>Gammaproteobacteria</taxon>
        <taxon>Lysobacterales</taxon>
        <taxon>Lysobacteraceae</taxon>
        <taxon>Xylella</taxon>
    </lineage>
</organism>
<dbReference type="EMBL" id="CP001011">
    <property type="protein sequence ID" value="ACB91885.1"/>
    <property type="molecule type" value="Genomic_DNA"/>
</dbReference>
<dbReference type="RefSeq" id="WP_011097648.1">
    <property type="nucleotide sequence ID" value="NC_010577.1"/>
</dbReference>
<dbReference type="SMR" id="B2I8H4"/>
<dbReference type="GeneID" id="93904144"/>
<dbReference type="KEGG" id="xfn:XfasM23_0438"/>
<dbReference type="HOGENOM" id="CLU_083987_3_3_6"/>
<dbReference type="Proteomes" id="UP000001698">
    <property type="component" value="Chromosome"/>
</dbReference>
<dbReference type="GO" id="GO:0022625">
    <property type="term" value="C:cytosolic large ribosomal subunit"/>
    <property type="evidence" value="ECO:0007669"/>
    <property type="project" value="TreeGrafter"/>
</dbReference>
<dbReference type="GO" id="GO:0019843">
    <property type="term" value="F:rRNA binding"/>
    <property type="evidence" value="ECO:0007669"/>
    <property type="project" value="UniProtKB-UniRule"/>
</dbReference>
<dbReference type="GO" id="GO:0003735">
    <property type="term" value="F:structural constituent of ribosome"/>
    <property type="evidence" value="ECO:0007669"/>
    <property type="project" value="InterPro"/>
</dbReference>
<dbReference type="GO" id="GO:0006412">
    <property type="term" value="P:translation"/>
    <property type="evidence" value="ECO:0007669"/>
    <property type="project" value="UniProtKB-UniRule"/>
</dbReference>
<dbReference type="CDD" id="cd00336">
    <property type="entry name" value="Ribosomal_L22"/>
    <property type="match status" value="1"/>
</dbReference>
<dbReference type="FunFam" id="3.90.470.10:FF:000001">
    <property type="entry name" value="50S ribosomal protein L22"/>
    <property type="match status" value="1"/>
</dbReference>
<dbReference type="Gene3D" id="3.90.470.10">
    <property type="entry name" value="Ribosomal protein L22/L17"/>
    <property type="match status" value="1"/>
</dbReference>
<dbReference type="HAMAP" id="MF_01331_B">
    <property type="entry name" value="Ribosomal_uL22_B"/>
    <property type="match status" value="1"/>
</dbReference>
<dbReference type="InterPro" id="IPR001063">
    <property type="entry name" value="Ribosomal_uL22"/>
</dbReference>
<dbReference type="InterPro" id="IPR005727">
    <property type="entry name" value="Ribosomal_uL22_bac/chlpt-type"/>
</dbReference>
<dbReference type="InterPro" id="IPR047867">
    <property type="entry name" value="Ribosomal_uL22_bac/org-type"/>
</dbReference>
<dbReference type="InterPro" id="IPR018260">
    <property type="entry name" value="Ribosomal_uL22_CS"/>
</dbReference>
<dbReference type="InterPro" id="IPR036394">
    <property type="entry name" value="Ribosomal_uL22_sf"/>
</dbReference>
<dbReference type="NCBIfam" id="TIGR01044">
    <property type="entry name" value="rplV_bact"/>
    <property type="match status" value="1"/>
</dbReference>
<dbReference type="PANTHER" id="PTHR13501">
    <property type="entry name" value="CHLOROPLAST 50S RIBOSOMAL PROTEIN L22-RELATED"/>
    <property type="match status" value="1"/>
</dbReference>
<dbReference type="PANTHER" id="PTHR13501:SF8">
    <property type="entry name" value="LARGE RIBOSOMAL SUBUNIT PROTEIN UL22M"/>
    <property type="match status" value="1"/>
</dbReference>
<dbReference type="Pfam" id="PF00237">
    <property type="entry name" value="Ribosomal_L22"/>
    <property type="match status" value="1"/>
</dbReference>
<dbReference type="SUPFAM" id="SSF54843">
    <property type="entry name" value="Ribosomal protein L22"/>
    <property type="match status" value="1"/>
</dbReference>
<dbReference type="PROSITE" id="PS00464">
    <property type="entry name" value="RIBOSOMAL_L22"/>
    <property type="match status" value="1"/>
</dbReference>
<proteinExistence type="inferred from homology"/>
<keyword id="KW-0687">Ribonucleoprotein</keyword>
<keyword id="KW-0689">Ribosomal protein</keyword>
<keyword id="KW-0694">RNA-binding</keyword>
<keyword id="KW-0699">rRNA-binding</keyword>
<name>RL22_XYLF2</name>
<protein>
    <recommendedName>
        <fullName evidence="1">Large ribosomal subunit protein uL22</fullName>
    </recommendedName>
    <alternativeName>
        <fullName evidence="2">50S ribosomal protein L22</fullName>
    </alternativeName>
</protein>
<accession>B2I8H4</accession>